<organism>
    <name type="scientific">Shigella sonnei (strain Ss046)</name>
    <dbReference type="NCBI Taxonomy" id="300269"/>
    <lineage>
        <taxon>Bacteria</taxon>
        <taxon>Pseudomonadati</taxon>
        <taxon>Pseudomonadota</taxon>
        <taxon>Gammaproteobacteria</taxon>
        <taxon>Enterobacterales</taxon>
        <taxon>Enterobacteriaceae</taxon>
        <taxon>Shigella</taxon>
    </lineage>
</organism>
<proteinExistence type="inferred from homology"/>
<protein>
    <recommendedName>
        <fullName evidence="1">Lipid-A-disaccharide synthase</fullName>
        <ecNumber evidence="1">2.4.1.182</ecNumber>
    </recommendedName>
</protein>
<keyword id="KW-0328">Glycosyltransferase</keyword>
<keyword id="KW-0441">Lipid A biosynthesis</keyword>
<keyword id="KW-0444">Lipid biosynthesis</keyword>
<keyword id="KW-0443">Lipid metabolism</keyword>
<keyword id="KW-1185">Reference proteome</keyword>
<keyword id="KW-0808">Transferase</keyword>
<reference key="1">
    <citation type="journal article" date="2005" name="Nucleic Acids Res.">
        <title>Genome dynamics and diversity of Shigella species, the etiologic agents of bacillary dysentery.</title>
        <authorList>
            <person name="Yang F."/>
            <person name="Yang J."/>
            <person name="Zhang X."/>
            <person name="Chen L."/>
            <person name="Jiang Y."/>
            <person name="Yan Y."/>
            <person name="Tang X."/>
            <person name="Wang J."/>
            <person name="Xiong Z."/>
            <person name="Dong J."/>
            <person name="Xue Y."/>
            <person name="Zhu Y."/>
            <person name="Xu X."/>
            <person name="Sun L."/>
            <person name="Chen S."/>
            <person name="Nie H."/>
            <person name="Peng J."/>
            <person name="Xu J."/>
            <person name="Wang Y."/>
            <person name="Yuan Z."/>
            <person name="Wen Y."/>
            <person name="Yao Z."/>
            <person name="Shen Y."/>
            <person name="Qiang B."/>
            <person name="Hou Y."/>
            <person name="Yu J."/>
            <person name="Jin Q."/>
        </authorList>
    </citation>
    <scope>NUCLEOTIDE SEQUENCE [LARGE SCALE GENOMIC DNA]</scope>
    <source>
        <strain>Ss046</strain>
    </source>
</reference>
<evidence type="ECO:0000255" key="1">
    <source>
        <dbReference type="HAMAP-Rule" id="MF_00392"/>
    </source>
</evidence>
<sequence>MTEQRPLTIALVAGETSGDILGAGLIRALKEHVPNARFVGVAGPRMQAEGCEAWYEMEELAVMGIVEVLGRLRRLLHIRADLTKRFGELKPDVFVGIDAPDFNITLEGNLKKQGIKTIHYVSPSVWAWRQKRVFKIGRATDLVLAFLPFEKAFYDKYNVPCRFIGHTMADAMPLDPDKNAARDVLGIPHDAHCLALLPGSRGAEVEMLSADFLKTAQLLRQTYPDLEIVVPLVNAKRREQFERIKAEVAPDLSVHLLDGMGREAMVASDAALLASGTAALECMLAKCPMVVGYRMKPFTFWLAKRLVKTDYVSLPNLLAGRELVKELLQEECEPQKLAAALLPLLANGKTSHAMHDTFRELHQQIRCNADEQAAQAVLELAQ</sequence>
<name>LPXB_SHISS</name>
<dbReference type="EC" id="2.4.1.182" evidence="1"/>
<dbReference type="EMBL" id="CP000038">
    <property type="protein sequence ID" value="AAZ86986.1"/>
    <property type="molecule type" value="Genomic_DNA"/>
</dbReference>
<dbReference type="RefSeq" id="WP_000139654.1">
    <property type="nucleotide sequence ID" value="NC_007384.1"/>
</dbReference>
<dbReference type="SMR" id="Q3Z5H6"/>
<dbReference type="CAZy" id="GT19">
    <property type="family name" value="Glycosyltransferase Family 19"/>
</dbReference>
<dbReference type="GeneID" id="93777243"/>
<dbReference type="KEGG" id="ssn:SSON_0194"/>
<dbReference type="HOGENOM" id="CLU_036577_3_0_6"/>
<dbReference type="UniPathway" id="UPA00359">
    <property type="reaction ID" value="UER00481"/>
</dbReference>
<dbReference type="Proteomes" id="UP000002529">
    <property type="component" value="Chromosome"/>
</dbReference>
<dbReference type="GO" id="GO:0016020">
    <property type="term" value="C:membrane"/>
    <property type="evidence" value="ECO:0007669"/>
    <property type="project" value="GOC"/>
</dbReference>
<dbReference type="GO" id="GO:0008915">
    <property type="term" value="F:lipid-A-disaccharide synthase activity"/>
    <property type="evidence" value="ECO:0007669"/>
    <property type="project" value="UniProtKB-UniRule"/>
</dbReference>
<dbReference type="GO" id="GO:0005543">
    <property type="term" value="F:phospholipid binding"/>
    <property type="evidence" value="ECO:0007669"/>
    <property type="project" value="TreeGrafter"/>
</dbReference>
<dbReference type="GO" id="GO:0009245">
    <property type="term" value="P:lipid A biosynthetic process"/>
    <property type="evidence" value="ECO:0007669"/>
    <property type="project" value="UniProtKB-UniRule"/>
</dbReference>
<dbReference type="CDD" id="cd01635">
    <property type="entry name" value="Glycosyltransferase_GTB-type"/>
    <property type="match status" value="1"/>
</dbReference>
<dbReference type="HAMAP" id="MF_00392">
    <property type="entry name" value="LpxB"/>
    <property type="match status" value="1"/>
</dbReference>
<dbReference type="InterPro" id="IPR003835">
    <property type="entry name" value="Glyco_trans_19"/>
</dbReference>
<dbReference type="NCBIfam" id="TIGR00215">
    <property type="entry name" value="lpxB"/>
    <property type="match status" value="1"/>
</dbReference>
<dbReference type="PANTHER" id="PTHR30372">
    <property type="entry name" value="LIPID-A-DISACCHARIDE SYNTHASE"/>
    <property type="match status" value="1"/>
</dbReference>
<dbReference type="PANTHER" id="PTHR30372:SF4">
    <property type="entry name" value="LIPID-A-DISACCHARIDE SYNTHASE, MITOCHONDRIAL-RELATED"/>
    <property type="match status" value="1"/>
</dbReference>
<dbReference type="Pfam" id="PF02684">
    <property type="entry name" value="LpxB"/>
    <property type="match status" value="1"/>
</dbReference>
<dbReference type="SUPFAM" id="SSF53756">
    <property type="entry name" value="UDP-Glycosyltransferase/glycogen phosphorylase"/>
    <property type="match status" value="1"/>
</dbReference>
<accession>Q3Z5H6</accession>
<comment type="function">
    <text evidence="1">Condensation of UDP-2,3-diacylglucosamine and 2,3-diacylglucosamine-1-phosphate to form lipid A disaccharide, a precursor of lipid A, a phosphorylated glycolipid that anchors the lipopolysaccharide to the outer membrane of the cell.</text>
</comment>
<comment type="catalytic activity">
    <reaction evidence="1">
        <text>2-N,3-O-bis[(3R)-3-hydroxytetradecanoyl]-alpha-D-glucosaminyl 1-phosphate + UDP-2-N,3-O-bis[(3R)-3-hydroxytetradecanoyl]-alpha-D-glucosamine = lipid A disaccharide (E. coli) + UDP + H(+)</text>
        <dbReference type="Rhea" id="RHEA:22668"/>
        <dbReference type="ChEBI" id="CHEBI:15378"/>
        <dbReference type="ChEBI" id="CHEBI:57957"/>
        <dbReference type="ChEBI" id="CHEBI:58223"/>
        <dbReference type="ChEBI" id="CHEBI:58466"/>
        <dbReference type="ChEBI" id="CHEBI:78847"/>
    </reaction>
</comment>
<comment type="catalytic activity">
    <reaction evidence="1">
        <text>a lipid X + a UDP-2-N,3-O-bis[(3R)-3-hydroxyacyl]-alpha-D-glucosamine = a lipid A disaccharide + UDP + H(+)</text>
        <dbReference type="Rhea" id="RHEA:67828"/>
        <dbReference type="ChEBI" id="CHEBI:15378"/>
        <dbReference type="ChEBI" id="CHEBI:58223"/>
        <dbReference type="ChEBI" id="CHEBI:137748"/>
        <dbReference type="ChEBI" id="CHEBI:176338"/>
        <dbReference type="ChEBI" id="CHEBI:176343"/>
        <dbReference type="EC" id="2.4.1.182"/>
    </reaction>
</comment>
<comment type="pathway">
    <text evidence="1">Glycolipid biosynthesis; lipid IV(A) biosynthesis; lipid IV(A) from (3R)-3-hydroxytetradecanoyl-[acyl-carrier-protein] and UDP-N-acetyl-alpha-D-glucosamine: step 5/6.</text>
</comment>
<comment type="similarity">
    <text evidence="1">Belongs to the LpxB family.</text>
</comment>
<gene>
    <name evidence="1" type="primary">lpxB</name>
    <name type="ordered locus">SSON_0194</name>
</gene>
<feature type="chain" id="PRO_0000255225" description="Lipid-A-disaccharide synthase">
    <location>
        <begin position="1"/>
        <end position="382"/>
    </location>
</feature>